<keyword id="KW-0963">Cytoplasm</keyword>
<keyword id="KW-0489">Methyltransferase</keyword>
<keyword id="KW-1185">Reference proteome</keyword>
<keyword id="KW-0694">RNA-binding</keyword>
<keyword id="KW-0698">rRNA processing</keyword>
<keyword id="KW-0949">S-adenosyl-L-methionine</keyword>
<keyword id="KW-0808">Transferase</keyword>
<sequence>MSSRPPASFSATFSAARSSKCVPPPRRPSTDVSLPSLRDTIQAHGLDAKKSLGQHFLLDPGICARIAALGGDLTGRSVVEIGPGPGGLTRALLDTPASRVDVVEIDERAWPLLDELATYYPDRLHVVRQDALKLDAATLAPAPRQIIANLPYNVATPLLVGWLRQASQWERLSLMFQLEVAERICAAPGSSAYGRLAVLSQWCASCSVALRIPPAAFSPPPKVHSAVAVIIPHAEQPSPQLFRAMEQVTAAAFGQRRKMLRSSLKSIGGERLLEQAEIEPTRRAETLSVAEFARLAELNLASR</sequence>
<organism>
    <name type="scientific">Gluconobacter oxydans (strain 621H)</name>
    <name type="common">Gluconobacter suboxydans</name>
    <dbReference type="NCBI Taxonomy" id="290633"/>
    <lineage>
        <taxon>Bacteria</taxon>
        <taxon>Pseudomonadati</taxon>
        <taxon>Pseudomonadota</taxon>
        <taxon>Alphaproteobacteria</taxon>
        <taxon>Acetobacterales</taxon>
        <taxon>Acetobacteraceae</taxon>
        <taxon>Gluconobacter</taxon>
    </lineage>
</organism>
<name>RSMA_GLUOX</name>
<evidence type="ECO:0000255" key="1">
    <source>
        <dbReference type="HAMAP-Rule" id="MF_00607"/>
    </source>
</evidence>
<evidence type="ECO:0000256" key="2">
    <source>
        <dbReference type="SAM" id="MobiDB-lite"/>
    </source>
</evidence>
<reference key="1">
    <citation type="journal article" date="2005" name="Nat. Biotechnol.">
        <title>Complete genome sequence of the acetic acid bacterium Gluconobacter oxydans.</title>
        <authorList>
            <person name="Prust C."/>
            <person name="Hoffmeister M."/>
            <person name="Liesegang H."/>
            <person name="Wiezer A."/>
            <person name="Fricke W.F."/>
            <person name="Ehrenreich A."/>
            <person name="Gottschalk G."/>
            <person name="Deppenmeier U."/>
        </authorList>
    </citation>
    <scope>NUCLEOTIDE SEQUENCE [LARGE SCALE GENOMIC DNA]</scope>
    <source>
        <strain>621H</strain>
    </source>
</reference>
<comment type="function">
    <text evidence="1">Specifically dimethylates two adjacent adenosines (A1518 and A1519) in the loop of a conserved hairpin near the 3'-end of 16S rRNA in the 30S particle. May play a critical role in biogenesis of 30S subunits.</text>
</comment>
<comment type="catalytic activity">
    <reaction evidence="1">
        <text>adenosine(1518)/adenosine(1519) in 16S rRNA + 4 S-adenosyl-L-methionine = N(6)-dimethyladenosine(1518)/N(6)-dimethyladenosine(1519) in 16S rRNA + 4 S-adenosyl-L-homocysteine + 4 H(+)</text>
        <dbReference type="Rhea" id="RHEA:19609"/>
        <dbReference type="Rhea" id="RHEA-COMP:10232"/>
        <dbReference type="Rhea" id="RHEA-COMP:10233"/>
        <dbReference type="ChEBI" id="CHEBI:15378"/>
        <dbReference type="ChEBI" id="CHEBI:57856"/>
        <dbReference type="ChEBI" id="CHEBI:59789"/>
        <dbReference type="ChEBI" id="CHEBI:74411"/>
        <dbReference type="ChEBI" id="CHEBI:74493"/>
        <dbReference type="EC" id="2.1.1.182"/>
    </reaction>
</comment>
<comment type="subcellular location">
    <subcellularLocation>
        <location evidence="1">Cytoplasm</location>
    </subcellularLocation>
</comment>
<comment type="similarity">
    <text evidence="1">Belongs to the class I-like SAM-binding methyltransferase superfamily. rRNA adenine N(6)-methyltransferase family. RsmA subfamily.</text>
</comment>
<gene>
    <name evidence="1" type="primary">rsmA</name>
    <name evidence="1" type="synonym">ksgA</name>
    <name type="ordered locus">GOX0302</name>
</gene>
<dbReference type="EC" id="2.1.1.182" evidence="1"/>
<dbReference type="EMBL" id="CP000009">
    <property type="protein sequence ID" value="AAW60085.1"/>
    <property type="molecule type" value="Genomic_DNA"/>
</dbReference>
<dbReference type="SMR" id="Q5FU61"/>
<dbReference type="STRING" id="290633.GOX0302"/>
<dbReference type="KEGG" id="gox:GOX0302"/>
<dbReference type="eggNOG" id="COG0030">
    <property type="taxonomic scope" value="Bacteria"/>
</dbReference>
<dbReference type="HOGENOM" id="CLU_041220_0_1_5"/>
<dbReference type="Proteomes" id="UP000006375">
    <property type="component" value="Chromosome"/>
</dbReference>
<dbReference type="GO" id="GO:0005829">
    <property type="term" value="C:cytosol"/>
    <property type="evidence" value="ECO:0007669"/>
    <property type="project" value="TreeGrafter"/>
</dbReference>
<dbReference type="GO" id="GO:0052908">
    <property type="term" value="F:16S rRNA (adenine(1518)-N(6)/adenine(1519)-N(6))-dimethyltransferase activity"/>
    <property type="evidence" value="ECO:0007669"/>
    <property type="project" value="UniProtKB-EC"/>
</dbReference>
<dbReference type="GO" id="GO:0003723">
    <property type="term" value="F:RNA binding"/>
    <property type="evidence" value="ECO:0007669"/>
    <property type="project" value="UniProtKB-KW"/>
</dbReference>
<dbReference type="CDD" id="cd02440">
    <property type="entry name" value="AdoMet_MTases"/>
    <property type="match status" value="1"/>
</dbReference>
<dbReference type="FunFam" id="1.10.8.100:FF:000001">
    <property type="entry name" value="Ribosomal RNA small subunit methyltransferase A"/>
    <property type="match status" value="1"/>
</dbReference>
<dbReference type="Gene3D" id="1.10.8.100">
    <property type="entry name" value="Ribosomal RNA adenine dimethylase-like, domain 2"/>
    <property type="match status" value="1"/>
</dbReference>
<dbReference type="Gene3D" id="3.40.50.150">
    <property type="entry name" value="Vaccinia Virus protein VP39"/>
    <property type="match status" value="1"/>
</dbReference>
<dbReference type="HAMAP" id="MF_00607">
    <property type="entry name" value="16SrRNA_methyltr_A"/>
    <property type="match status" value="1"/>
</dbReference>
<dbReference type="InterPro" id="IPR001737">
    <property type="entry name" value="KsgA/Erm"/>
</dbReference>
<dbReference type="InterPro" id="IPR023165">
    <property type="entry name" value="rRNA_Ade_diMease-like_C"/>
</dbReference>
<dbReference type="InterPro" id="IPR020596">
    <property type="entry name" value="rRNA_Ade_Mease_Trfase_CS"/>
</dbReference>
<dbReference type="InterPro" id="IPR020598">
    <property type="entry name" value="rRNA_Ade_methylase_Trfase_N"/>
</dbReference>
<dbReference type="InterPro" id="IPR011530">
    <property type="entry name" value="rRNA_adenine_dimethylase"/>
</dbReference>
<dbReference type="InterPro" id="IPR029063">
    <property type="entry name" value="SAM-dependent_MTases_sf"/>
</dbReference>
<dbReference type="NCBIfam" id="TIGR00755">
    <property type="entry name" value="ksgA"/>
    <property type="match status" value="1"/>
</dbReference>
<dbReference type="PANTHER" id="PTHR11727">
    <property type="entry name" value="DIMETHYLADENOSINE TRANSFERASE"/>
    <property type="match status" value="1"/>
</dbReference>
<dbReference type="PANTHER" id="PTHR11727:SF7">
    <property type="entry name" value="DIMETHYLADENOSINE TRANSFERASE-RELATED"/>
    <property type="match status" value="1"/>
</dbReference>
<dbReference type="Pfam" id="PF00398">
    <property type="entry name" value="RrnaAD"/>
    <property type="match status" value="1"/>
</dbReference>
<dbReference type="SMART" id="SM00650">
    <property type="entry name" value="rADc"/>
    <property type="match status" value="1"/>
</dbReference>
<dbReference type="SUPFAM" id="SSF53335">
    <property type="entry name" value="S-adenosyl-L-methionine-dependent methyltransferases"/>
    <property type="match status" value="1"/>
</dbReference>
<dbReference type="PROSITE" id="PS01131">
    <property type="entry name" value="RRNA_A_DIMETH"/>
    <property type="match status" value="1"/>
</dbReference>
<dbReference type="PROSITE" id="PS51689">
    <property type="entry name" value="SAM_RNA_A_N6_MT"/>
    <property type="match status" value="1"/>
</dbReference>
<accession>Q5FU61</accession>
<feature type="chain" id="PRO_0000101536" description="Ribosomal RNA small subunit methyltransferase A">
    <location>
        <begin position="1"/>
        <end position="303"/>
    </location>
</feature>
<feature type="region of interest" description="Disordered" evidence="2">
    <location>
        <begin position="1"/>
        <end position="34"/>
    </location>
</feature>
<feature type="compositionally biased region" description="Low complexity" evidence="2">
    <location>
        <begin position="1"/>
        <end position="19"/>
    </location>
</feature>
<feature type="binding site" evidence="1">
    <location>
        <position position="55"/>
    </location>
    <ligand>
        <name>S-adenosyl-L-methionine</name>
        <dbReference type="ChEBI" id="CHEBI:59789"/>
    </ligand>
</feature>
<feature type="binding site" evidence="1">
    <location>
        <position position="57"/>
    </location>
    <ligand>
        <name>S-adenosyl-L-methionine</name>
        <dbReference type="ChEBI" id="CHEBI:59789"/>
    </ligand>
</feature>
<feature type="binding site" evidence="1">
    <location>
        <position position="82"/>
    </location>
    <ligand>
        <name>S-adenosyl-L-methionine</name>
        <dbReference type="ChEBI" id="CHEBI:59789"/>
    </ligand>
</feature>
<feature type="binding site" evidence="1">
    <location>
        <position position="104"/>
    </location>
    <ligand>
        <name>S-adenosyl-L-methionine</name>
        <dbReference type="ChEBI" id="CHEBI:59789"/>
    </ligand>
</feature>
<feature type="binding site" evidence="1">
    <location>
        <position position="130"/>
    </location>
    <ligand>
        <name>S-adenosyl-L-methionine</name>
        <dbReference type="ChEBI" id="CHEBI:59789"/>
    </ligand>
</feature>
<feature type="binding site" evidence="1">
    <location>
        <position position="149"/>
    </location>
    <ligand>
        <name>S-adenosyl-L-methionine</name>
        <dbReference type="ChEBI" id="CHEBI:59789"/>
    </ligand>
</feature>
<proteinExistence type="inferred from homology"/>
<protein>
    <recommendedName>
        <fullName evidence="1">Ribosomal RNA small subunit methyltransferase A</fullName>
        <ecNumber evidence="1">2.1.1.182</ecNumber>
    </recommendedName>
    <alternativeName>
        <fullName evidence="1">16S rRNA (adenine(1518)-N(6)/adenine(1519)-N(6))-dimethyltransferase</fullName>
    </alternativeName>
    <alternativeName>
        <fullName evidence="1">16S rRNA dimethyladenosine transferase</fullName>
    </alternativeName>
    <alternativeName>
        <fullName evidence="1">16S rRNA dimethylase</fullName>
    </alternativeName>
    <alternativeName>
        <fullName evidence="1">S-adenosylmethionine-6-N', N'-adenosyl(rRNA) dimethyltransferase</fullName>
    </alternativeName>
</protein>